<organism>
    <name type="scientific">Alcanivorax borkumensis (strain ATCC 700651 / DSM 11573 / NCIMB 13689 / SK2)</name>
    <dbReference type="NCBI Taxonomy" id="393595"/>
    <lineage>
        <taxon>Bacteria</taxon>
        <taxon>Pseudomonadati</taxon>
        <taxon>Pseudomonadota</taxon>
        <taxon>Gammaproteobacteria</taxon>
        <taxon>Oceanospirillales</taxon>
        <taxon>Alcanivoracaceae</taxon>
        <taxon>Alcanivorax</taxon>
    </lineage>
</organism>
<reference key="1">
    <citation type="journal article" date="2006" name="Nat. Biotechnol.">
        <title>Genome sequence of the ubiquitous hydrocarbon-degrading marine bacterium Alcanivorax borkumensis.</title>
        <authorList>
            <person name="Schneiker S."/>
            <person name="Martins dos Santos V.A.P."/>
            <person name="Bartels D."/>
            <person name="Bekel T."/>
            <person name="Brecht M."/>
            <person name="Buhrmester J."/>
            <person name="Chernikova T.N."/>
            <person name="Denaro R."/>
            <person name="Ferrer M."/>
            <person name="Gertler C."/>
            <person name="Goesmann A."/>
            <person name="Golyshina O.V."/>
            <person name="Kaminski F."/>
            <person name="Khachane A.N."/>
            <person name="Lang S."/>
            <person name="Linke B."/>
            <person name="McHardy A.C."/>
            <person name="Meyer F."/>
            <person name="Nechitaylo T."/>
            <person name="Puehler A."/>
            <person name="Regenhardt D."/>
            <person name="Rupp O."/>
            <person name="Sabirova J.S."/>
            <person name="Selbitschka W."/>
            <person name="Yakimov M.M."/>
            <person name="Timmis K.N."/>
            <person name="Vorhoelter F.-J."/>
            <person name="Weidner S."/>
            <person name="Kaiser O."/>
            <person name="Golyshin P.N."/>
        </authorList>
    </citation>
    <scope>NUCLEOTIDE SEQUENCE [LARGE SCALE GENOMIC DNA]</scope>
    <source>
        <strain>ATCC 700651 / DSM 11573 / NCIMB 13689 / SK2</strain>
    </source>
</reference>
<reference key="2">
    <citation type="journal article" date="2010" name="Biotechnol. Lett.">
        <title>Production of a recombinant alkane hydroxylase (AlkB2) from Alcanivorax borkumensis.</title>
        <authorList>
            <person name="Miri M."/>
            <person name="Bambai B."/>
            <person name="Tabandeh F."/>
            <person name="Sadeghizadeh M."/>
            <person name="Kamali N."/>
        </authorList>
    </citation>
    <scope>FUNCTION</scope>
    <scope>SUBUNIT</scope>
</reference>
<accession>Q0VTB0</accession>
<evidence type="ECO:0000250" key="1"/>
<evidence type="ECO:0000250" key="2">
    <source>
        <dbReference type="UniProtKB" id="Q9HTK9"/>
    </source>
</evidence>
<evidence type="ECO:0000269" key="3">
    <source>
    </source>
</evidence>
<evidence type="ECO:0000305" key="4"/>
<proteinExistence type="evidence at protein level"/>
<comment type="function">
    <text evidence="3">Involved in the hydrocarbon hydroxylating system, which transfers electrons from NADH to rubredoxin reductase and then through rubredoxin to alkane 1 monooxygenase.</text>
</comment>
<comment type="catalytic activity">
    <reaction>
        <text>2 reduced [rubredoxin] + NAD(+) + H(+) = 2 oxidized [rubredoxin] + NADH</text>
        <dbReference type="Rhea" id="RHEA:18597"/>
        <dbReference type="Rhea" id="RHEA-COMP:10302"/>
        <dbReference type="Rhea" id="RHEA-COMP:10303"/>
        <dbReference type="ChEBI" id="CHEBI:15378"/>
        <dbReference type="ChEBI" id="CHEBI:29033"/>
        <dbReference type="ChEBI" id="CHEBI:29034"/>
        <dbReference type="ChEBI" id="CHEBI:57540"/>
        <dbReference type="ChEBI" id="CHEBI:57945"/>
        <dbReference type="EC" id="1.18.1.1"/>
    </reaction>
</comment>
<comment type="cofactor">
    <cofactor evidence="4">
        <name>FAD</name>
        <dbReference type="ChEBI" id="CHEBI:57692"/>
    </cofactor>
</comment>
<comment type="pathway">
    <text>Hydrocarbon metabolism; alkane degradation.</text>
</comment>
<comment type="subunit">
    <text evidence="3">Homodimer.</text>
</comment>
<comment type="subcellular location">
    <subcellularLocation>
        <location evidence="1">Cytoplasm</location>
    </subcellularLocation>
</comment>
<comment type="similarity">
    <text evidence="4">Belongs to the FAD-dependent oxidoreductase family.</text>
</comment>
<feature type="chain" id="PRO_0000392227" description="Rubredoxin-NAD(+) reductase">
    <location>
        <begin position="1"/>
        <end position="382"/>
    </location>
</feature>
<feature type="binding site" evidence="2">
    <location>
        <begin position="9"/>
        <end position="12"/>
    </location>
    <ligand>
        <name>FAD</name>
        <dbReference type="ChEBI" id="CHEBI:57692"/>
    </ligand>
</feature>
<feature type="binding site" evidence="2">
    <location>
        <begin position="33"/>
        <end position="34"/>
    </location>
    <ligand>
        <name>FAD</name>
        <dbReference type="ChEBI" id="CHEBI:57692"/>
    </ligand>
</feature>
<feature type="binding site" evidence="2">
    <location>
        <position position="42"/>
    </location>
    <ligand>
        <name>FAD</name>
        <dbReference type="ChEBI" id="CHEBI:57692"/>
    </ligand>
</feature>
<feature type="binding site" evidence="2">
    <location>
        <position position="80"/>
    </location>
    <ligand>
        <name>FAD</name>
        <dbReference type="ChEBI" id="CHEBI:57692"/>
    </ligand>
</feature>
<feature type="binding site" evidence="2">
    <location>
        <position position="156"/>
    </location>
    <ligand>
        <name>FAD</name>
        <dbReference type="ChEBI" id="CHEBI:57692"/>
    </ligand>
</feature>
<feature type="binding site" evidence="2">
    <location>
        <position position="275"/>
    </location>
    <ligand>
        <name>FAD</name>
        <dbReference type="ChEBI" id="CHEBI:57692"/>
    </ligand>
</feature>
<feature type="binding site" evidence="2">
    <location>
        <position position="287"/>
    </location>
    <ligand>
        <name>FAD</name>
        <dbReference type="ChEBI" id="CHEBI:57692"/>
    </ligand>
</feature>
<feature type="binding site" evidence="2">
    <location>
        <position position="318"/>
    </location>
    <ligand>
        <name>FAD</name>
        <dbReference type="ChEBI" id="CHEBI:57692"/>
    </ligand>
</feature>
<dbReference type="EC" id="1.18.1.1"/>
<dbReference type="EMBL" id="AM286690">
    <property type="protein sequence ID" value="CAL15610.1"/>
    <property type="molecule type" value="Genomic_DNA"/>
</dbReference>
<dbReference type="RefSeq" id="WP_011587459.1">
    <property type="nucleotide sequence ID" value="NC_008260.1"/>
</dbReference>
<dbReference type="SMR" id="Q0VTB0"/>
<dbReference type="STRING" id="393595.ABO_0162"/>
<dbReference type="KEGG" id="abo:ABO_0162"/>
<dbReference type="eggNOG" id="COG1251">
    <property type="taxonomic scope" value="Bacteria"/>
</dbReference>
<dbReference type="HOGENOM" id="CLU_003291_4_4_6"/>
<dbReference type="OrthoDB" id="9800607at2"/>
<dbReference type="BRENDA" id="1.18.1.1">
    <property type="organism ID" value="7738"/>
</dbReference>
<dbReference type="UniPathway" id="UPA00191"/>
<dbReference type="Proteomes" id="UP000008871">
    <property type="component" value="Chromosome"/>
</dbReference>
<dbReference type="GO" id="GO:0005737">
    <property type="term" value="C:cytoplasm"/>
    <property type="evidence" value="ECO:0007669"/>
    <property type="project" value="UniProtKB-SubCell"/>
</dbReference>
<dbReference type="GO" id="GO:0050660">
    <property type="term" value="F:flavin adenine dinucleotide binding"/>
    <property type="evidence" value="ECO:0000250"/>
    <property type="project" value="UniProtKB"/>
</dbReference>
<dbReference type="GO" id="GO:0015044">
    <property type="term" value="F:rubredoxin-NAD+ reductase activity"/>
    <property type="evidence" value="ECO:0007669"/>
    <property type="project" value="UniProtKB-EC"/>
</dbReference>
<dbReference type="GO" id="GO:0015046">
    <property type="term" value="F:rubredoxin-NADP+ reductase activity"/>
    <property type="evidence" value="ECO:0000250"/>
    <property type="project" value="UniProtKB"/>
</dbReference>
<dbReference type="GO" id="GO:0043448">
    <property type="term" value="P:alkane catabolic process"/>
    <property type="evidence" value="ECO:0007669"/>
    <property type="project" value="UniProtKB-UniPathway"/>
</dbReference>
<dbReference type="Gene3D" id="3.30.390.120">
    <property type="match status" value="1"/>
</dbReference>
<dbReference type="Gene3D" id="3.50.50.60">
    <property type="entry name" value="FAD/NAD(P)-binding domain"/>
    <property type="match status" value="2"/>
</dbReference>
<dbReference type="InterPro" id="IPR050260">
    <property type="entry name" value="FAD-bd_OxRdtase"/>
</dbReference>
<dbReference type="InterPro" id="IPR036188">
    <property type="entry name" value="FAD/NAD-bd_sf"/>
</dbReference>
<dbReference type="InterPro" id="IPR023753">
    <property type="entry name" value="FAD/NAD-binding_dom"/>
</dbReference>
<dbReference type="InterPro" id="IPR041364">
    <property type="entry name" value="Rbx-bd"/>
</dbReference>
<dbReference type="PANTHER" id="PTHR43429:SF3">
    <property type="entry name" value="NITRITE REDUCTASE [NAD(P)H]"/>
    <property type="match status" value="1"/>
</dbReference>
<dbReference type="PANTHER" id="PTHR43429">
    <property type="entry name" value="PYRIDINE NUCLEOTIDE-DISULFIDE OXIDOREDUCTASE DOMAIN-CONTAINING"/>
    <property type="match status" value="1"/>
</dbReference>
<dbReference type="Pfam" id="PF07992">
    <property type="entry name" value="Pyr_redox_2"/>
    <property type="match status" value="1"/>
</dbReference>
<dbReference type="Pfam" id="PF18113">
    <property type="entry name" value="Rbx_binding"/>
    <property type="match status" value="1"/>
</dbReference>
<dbReference type="PRINTS" id="PR00368">
    <property type="entry name" value="FADPNR"/>
</dbReference>
<dbReference type="PRINTS" id="PR00411">
    <property type="entry name" value="PNDRDTASEI"/>
</dbReference>
<dbReference type="SUPFAM" id="SSF51905">
    <property type="entry name" value="FAD/NAD(P)-binding domain"/>
    <property type="match status" value="2"/>
</dbReference>
<protein>
    <recommendedName>
        <fullName>Rubredoxin-NAD(+) reductase</fullName>
        <shortName>RdxR</shortName>
        <ecNumber>1.18.1.1</ecNumber>
    </recommendedName>
</protein>
<gene>
    <name type="primary">rubB</name>
    <name type="ordered locus">ABO_0162</name>
</gene>
<sequence>MHPIVIVGTGLAGFNTVKEFRKLDKETPIVMLTADDGRNYSKPMLSAGFSKGKTADDLCMATPEKVAEQLNVDVRTGVHVAGIDATNKRVLLPDDHLDYSKLVLALGADTWTPPLEGDAVGEVFSVNDLMDYGKFRAAVEGKKTVTILGGGLIGCEFANDLSNGGFKVSLVEPMGRCLPLLLPEQASEAVGRGLADLGVQFHFGPLAKAVHHGDNGQLVTELSDGSQLESDVVLSAIGLRPRISLAKEAGLDTNRGILTDKSLRTSAEHIYALGDCAEVQGHVLPYVLPLMASARALAKTLAGETTEVSYGVMPVTIKTPACPVVVCPAAEGSEGAWEVEAEGNTVQALFRSKDGSLLGYALTGEAVKEKMKLNKELPAIMP</sequence>
<name>RURE_ALCBS</name>
<keyword id="KW-0963">Cytoplasm</keyword>
<keyword id="KW-0274">FAD</keyword>
<keyword id="KW-0285">Flavoprotein</keyword>
<keyword id="KW-0520">NAD</keyword>
<keyword id="KW-0560">Oxidoreductase</keyword>
<keyword id="KW-1185">Reference proteome</keyword>